<comment type="function">
    <text evidence="2">Glycosyltransferase that catalyzes the C-glucosylation of daidzein to puerarin (PubMed:28207970). Shows activity with the isoflavones daidzein and genistein, but has no activity towards flavonoids such as 2-hydroxynaringenin (PubMed:28207970). Can use UDP-glucose, but not UDP-galactose or UDP-glucuronic acid as sugar donor (PubMed:28207970). Does not require bivalent cations for activity (PubMed:28207970).</text>
</comment>
<comment type="activity regulation">
    <text evidence="2">Inhibited by Cu(2+) or Zn(2+).</text>
</comment>
<comment type="biophysicochemical properties">
    <kinetics>
        <KM evidence="2">32.8 uM for daidzein</KM>
        <KM evidence="2">12.16 uM for genistein</KM>
        <text evidence="2">kcat is 0.35 sec(-1) with daidzein as substrate. kcat is 0.45 sec(-1) with genistein as substrate.</text>
    </kinetics>
    <phDependence>
        <text evidence="2">Optimum pH is 8.0.</text>
    </phDependence>
</comment>
<comment type="similarity">
    <text evidence="4">Belongs to the UDP-glycosyltransferase family.</text>
</comment>
<organism evidence="5">
    <name type="scientific">Pueraria montana var. lobata</name>
    <name type="common">Kudzu vine</name>
    <name type="synonym">Pueraria lobata</name>
    <dbReference type="NCBI Taxonomy" id="3893"/>
    <lineage>
        <taxon>Eukaryota</taxon>
        <taxon>Viridiplantae</taxon>
        <taxon>Streptophyta</taxon>
        <taxon>Embryophyta</taxon>
        <taxon>Tracheophyta</taxon>
        <taxon>Spermatophyta</taxon>
        <taxon>Magnoliopsida</taxon>
        <taxon>eudicotyledons</taxon>
        <taxon>Gunneridae</taxon>
        <taxon>Pentapetalae</taxon>
        <taxon>rosids</taxon>
        <taxon>fabids</taxon>
        <taxon>Fabales</taxon>
        <taxon>Fabaceae</taxon>
        <taxon>Papilionoideae</taxon>
        <taxon>50 kb inversion clade</taxon>
        <taxon>NPAAA clade</taxon>
        <taxon>indigoferoid/millettioid clade</taxon>
        <taxon>Phaseoleae</taxon>
        <taxon>Pueraria</taxon>
    </lineage>
</organism>
<name>UGT43_PUEML</name>
<keyword id="KW-0328">Glycosyltransferase</keyword>
<keyword id="KW-0808">Transferase</keyword>
<dbReference type="EC" id="2.4.1.-" evidence="2"/>
<dbReference type="EMBL" id="KU317801">
    <property type="protein sequence ID" value="AMQ26115.2"/>
    <property type="molecule type" value="mRNA"/>
</dbReference>
<dbReference type="SMR" id="A0A172J2G3"/>
<dbReference type="SABIO-RK" id="A0A172J2G3"/>
<dbReference type="GO" id="GO:0035251">
    <property type="term" value="F:UDP-glucosyltransferase activity"/>
    <property type="evidence" value="ECO:0007669"/>
    <property type="project" value="InterPro"/>
</dbReference>
<dbReference type="CDD" id="cd03784">
    <property type="entry name" value="GT1_Gtf-like"/>
    <property type="match status" value="1"/>
</dbReference>
<dbReference type="FunFam" id="3.40.50.2000:FF:000056">
    <property type="entry name" value="Glycosyltransferase"/>
    <property type="match status" value="1"/>
</dbReference>
<dbReference type="Gene3D" id="3.40.50.2000">
    <property type="entry name" value="Glycogen Phosphorylase B"/>
    <property type="match status" value="2"/>
</dbReference>
<dbReference type="InterPro" id="IPR050481">
    <property type="entry name" value="UDP-glycosyltransf_plant"/>
</dbReference>
<dbReference type="InterPro" id="IPR002213">
    <property type="entry name" value="UDP_glucos_trans"/>
</dbReference>
<dbReference type="InterPro" id="IPR035595">
    <property type="entry name" value="UDP_glycos_trans_CS"/>
</dbReference>
<dbReference type="PANTHER" id="PTHR48048">
    <property type="entry name" value="GLYCOSYLTRANSFERASE"/>
    <property type="match status" value="1"/>
</dbReference>
<dbReference type="PANTHER" id="PTHR48048:SF81">
    <property type="entry name" value="GLYCOSYLTRANSFERASE"/>
    <property type="match status" value="1"/>
</dbReference>
<dbReference type="Pfam" id="PF00201">
    <property type="entry name" value="UDPGT"/>
    <property type="match status" value="1"/>
</dbReference>
<dbReference type="SUPFAM" id="SSF53756">
    <property type="entry name" value="UDP-Glycosyltransferase/glycogen phosphorylase"/>
    <property type="match status" value="1"/>
</dbReference>
<dbReference type="PROSITE" id="PS00375">
    <property type="entry name" value="UDPGT"/>
    <property type="match status" value="1"/>
</dbReference>
<reference key="1">
    <citation type="journal article" date="2016" name="Front. Plant Sci.">
        <title>Molecular Cloning and Functional Characterization of a Novel (Iso)flavone 4',7-O-diglucoside Glucosyltransferase from Pueraria lobata.</title>
        <authorList>
            <person name="Wang X."/>
            <person name="Fan R."/>
            <person name="Li J."/>
            <person name="Li C."/>
            <person name="Zhang Y."/>
        </authorList>
    </citation>
    <scope>NUCLEOTIDE SEQUENCE [MRNA]</scope>
    <source>
        <tissue>Root</tissue>
    </source>
</reference>
<reference key="2">
    <citation type="journal article" date="2017" name="Plant J.">
        <title>Molecular characterization of the C-glucosylation for puerarin biosynthesis in Pueraria lobata.</title>
        <authorList>
            <person name="Wang X."/>
            <person name="Li C."/>
            <person name="Zhou C."/>
            <person name="Li J."/>
            <person name="Zhang Y."/>
        </authorList>
    </citation>
    <scope>FUNCTION</scope>
    <scope>SUBSTRATE SPECIFICITY</scope>
    <scope>ACTIVITY REGULATION</scope>
    <scope>BIOPHYSICOCHEMICAL PROPERTIES</scope>
</reference>
<sequence length="469" mass="52437">MTRYEVVFIAIPTLGNLVPQVEFANLLTKHDPRFSATILTVSMPQRPLMNTYVQARASSAANIKLLQLPIVDPPAPEQYQTLVGFLSLHMQNHKHHVKHALLNLMKTTESNSSNSVRLAAIFVDMFSTTLIDVAAELAVPCYLFFASPASCLGFTLDLPRFDLAESKSEFTVPCFKNLLPRSVFPNLVLDAKDGTFWLSYHARRYKETKGIVINTLQELETHALQSLHNDSQLQRVYPIGPILDLVGSAQWDPNPAQYKRIMEWLDQQPLSSVVLLCFGSMGSLEANQVEEIAIGLERAGVRFLWALRESPKAQLEYPRDYENHKDVLPDGFLERTNNIGLVCGWVPQAVVLAHKAVGGFVSHCGWNSILESLWHGVPVATWPLYSEQQMNAFQMVRDLGLAVEISVDYRVGADLVRAEEVENGLRSLMKGGDEIRRKVKEMSDTCRGALLENGSSYSNLVSLIQELTS</sequence>
<gene>
    <name evidence="3" type="primary">UGT43</name>
</gene>
<proteinExistence type="evidence at protein level"/>
<protein>
    <recommendedName>
        <fullName evidence="3">UDP-glycosyltransferase 43</fullName>
        <shortName evidence="3">PlUGT43</shortName>
        <ecNumber evidence="2">2.4.1.-</ecNumber>
    </recommendedName>
    <alternativeName>
        <fullName evidence="4">UDP-glucose:daidzein C-glucosyltransferase</fullName>
    </alternativeName>
</protein>
<evidence type="ECO:0000250" key="1">
    <source>
        <dbReference type="UniProtKB" id="Q9M156"/>
    </source>
</evidence>
<evidence type="ECO:0000269" key="2">
    <source>
    </source>
</evidence>
<evidence type="ECO:0000303" key="3">
    <source>
    </source>
</evidence>
<evidence type="ECO:0000305" key="4"/>
<evidence type="ECO:0000312" key="5">
    <source>
        <dbReference type="EMBL" id="AMQ26115.2"/>
    </source>
</evidence>
<accession>A0A172J2G3</accession>
<feature type="chain" id="PRO_0000439667" description="UDP-glycosyltransferase 43">
    <location>
        <begin position="1"/>
        <end position="469"/>
    </location>
</feature>
<feature type="binding site" evidence="1">
    <location>
        <position position="280"/>
    </location>
    <ligand>
        <name>UDP-alpha-D-glucose</name>
        <dbReference type="ChEBI" id="CHEBI:58885"/>
    </ligand>
</feature>
<feature type="binding site" evidence="1">
    <location>
        <begin position="345"/>
        <end position="346"/>
    </location>
    <ligand>
        <name>UDP-alpha-D-glucose</name>
        <dbReference type="ChEBI" id="CHEBI:58885"/>
    </ligand>
</feature>
<feature type="binding site" evidence="1">
    <location>
        <begin position="363"/>
        <end position="371"/>
    </location>
    <ligand>
        <name>UDP-alpha-D-glucose</name>
        <dbReference type="ChEBI" id="CHEBI:58885"/>
    </ligand>
</feature>
<feature type="binding site" evidence="1">
    <location>
        <begin position="385"/>
        <end position="388"/>
    </location>
    <ligand>
        <name>UDP-alpha-D-glucose</name>
        <dbReference type="ChEBI" id="CHEBI:58885"/>
    </ligand>
</feature>